<proteinExistence type="inferred from homology"/>
<gene>
    <name type="primary">sev</name>
</gene>
<comment type="function">
    <text>Receptor for an extracellular signal required to instruct a cell to differentiate into a R7 photoreceptor. The ligand for Sev is the Boss (Bride of Sevenless) protein.</text>
</comment>
<comment type="catalytic activity">
    <reaction evidence="5">
        <text>L-tyrosyl-[protein] + ATP = O-phospho-L-tyrosyl-[protein] + ADP + H(+)</text>
        <dbReference type="Rhea" id="RHEA:10596"/>
        <dbReference type="Rhea" id="RHEA-COMP:10136"/>
        <dbReference type="Rhea" id="RHEA-COMP:20101"/>
        <dbReference type="ChEBI" id="CHEBI:15378"/>
        <dbReference type="ChEBI" id="CHEBI:30616"/>
        <dbReference type="ChEBI" id="CHEBI:46858"/>
        <dbReference type="ChEBI" id="CHEBI:61978"/>
        <dbReference type="ChEBI" id="CHEBI:456216"/>
        <dbReference type="EC" id="2.7.10.1"/>
    </reaction>
</comment>
<comment type="subcellular location">
    <subcellularLocation>
        <location evidence="7">Cell membrane</location>
        <topology evidence="7">Single-pass membrane protein</topology>
    </subcellularLocation>
</comment>
<comment type="domain">
    <text>It is unclear whether the potential membrane spanning region near the N-terminus is present as a transmembrane domain in the native protein or serves as a cleaved signal sequence.</text>
</comment>
<comment type="similarity">
    <text evidence="3">Belongs to the protein kinase superfamily. Tyr protein kinase family. Insulin receptor subfamily.</text>
</comment>
<name>7LESS_DROVI</name>
<sequence length="2594" mass="289133">MFWREDAAQQQQQQQQQQQQQQQQQQPPHPPKRLSFSFNVKIAVNVNTKMSTTHINQERSKQQTTTGSRSRSRSNSNSSVSCKGDGDRRVRRHTTRLVGLRQQLLHLGRQLNPGQFLVTGHGGISTILIANLLLLLLLSLCCNVCCRSHIEPDQNLTPTTTSPAAVAVVPMLLPLAQTHMRPQLDSDVVEKVAVWTKHVGAAPPSIAEGIAISSVVRMPPSIQTPTETVRRQEQQRQQQQQQQEAAAAAAADAAIDERIVLERVTRDCVQRCIVEEDLFLDEFGIKCEKADNSDKCYKTRCNKGCAQWYRALKEIEPCQEACASTQFYPYDMPCIGACETAQRDYWHMQRLAMARLVETTQPQLLEMTDESSTLTIKWAMQFPENYLASRPFNIQYQQVDNQSEPEWHNLADYDCDEYYVCEILEALVPYTRYKFRFELPFGESSEDVLYSPATPVYETPMEGAPISAPIIVALLALDEHHVFVHWRPGRYSNAPIEGYRVLLTSAGNTSREQLLPAQRTSCIFAQLQPLTNYTVALTMINKQGEGPSTVVSIVTKSPLEPQQLQSVLLASEHSIIWQSLEPAGETRLLYTSEPAAISDFTFSQREQRLWLLDELGQLHSQLLDETTTSAARRLRLELPSNGSSQWTPRKLSLDWLQRRLYIAAQANSSDGAEGGFELFSSNLEGGDVQMAGVQLGLVVEQLELDALNGWLFWCDADSLWRLDLSSKQQLRLTQPAGAPGRFMLEPQRWLLHVLLPQENQLLELSYDGGHKHALALSNDSWRGFAWSSDQAQLLLANETQLQLLDGQTLVPLANWSPDGGCCALLPLERRRQPLSLEPPAPRELRALLGAQGAHITWQPPAANPYQTATAAARNFSYELEVLDVASQSAYNIRNIRVPHFGLERLQADNLYQLRVRANNAAGRAGVWTAPLATRTWPLGDHRLRWATQRGSLYTTNELGGQLQPLPVQLASSPGPLALVNASVAYYVSGREQSLHCVNLLQPQLSCTDERLEHVGAVAYDWRGGLLYWTDLARDCVQRLDPFSGERELLPIFGARHLALDSAQGHLYYSSSAHLARRSLSALSTHQPELEYYHVNGLAGQISGFCLDLPQRHIYWLVAGNSALHLYRTALSAGGSQAAVPLQLLTTLPAADALPHTLQHLAPLGALLWLAADGRGAHLLRLAAQLETDTDTMRLLPEGLVEPLSAVQLLERSAGPPPPPPDEGVRPLAVPPDSVHIDEGGHWNDFRVRWQPAASGGNHSVCYKLLLEHGSERLITLELLTPFARITQLAQAPLGLRISITPHTAWRAGSTTRVQLDTPVAAPTQPRRLRVFVERQAAPLQLAPNVSALLRWDVPEEHAGSQSLQYRISCWRGSELHSELLLNQSTLEARVEHLQPEETYRFQVQAHVAATGLAAGATSHALHVSPEVQSVPRLLYANAEHIGELDLDTGHRKQLVHTASPVEHLVVLQGEQRLLWVNEHVELLSHVPGKAPAKLARMRAEVLALTVDWVQRIVYWAELDAADGGCVIYSLDLCRFDGRILQGERLWSTPRGQLLRDLVALPHARQLVWLQHDLDSRNATLQGRSLANGSALTFEGVTLPLWRLFEGSQEPLAETLNLVDHLGRLCVYHVARQLCTSSALRAQLNLLNDDIGQLAQDPGYLYALRNGSVRAYGRRRQQLEFLLELQPDEVRLLRAYNYQAYPSRRCLLLPTTAAALESTPSSCEETQCSLQLPALSAAPDCPLPVPGLNYQLNLSSSSRSAQLELRSLHSAAGLTLNISQLQPYQAYELRAQVGSYYQQQLGQEPLQLPVLTLHTAAATPSAPRNFSGRALSPSELELSWLAPLELRSASVYYTLHWQLQLEDTEEQSQEQPAQEQRVETAGVQRLTGLQPARLYQVWLQAHATPSKYNSSGRLLIRSYAPLPPLQLIELNAYGMTLAWPGTPDALSSLTLECQSLREQLQFNVAGNHTQMRLAPLQPKTRYSCRLALAYAATPGAPIYFGPSHEYETLGDAPSAPGRPQLEHIAGEIFRVSWTPALDNGSPILLYNLEALQARRTNRRRRRRRETTLSLLPWAEEPLVIEDQWLDFCNTTELSCIVRELHTRRLLLFRVRARNRPHGWGPYSEDSERIAEPFVSPEKRGSLVLAIIAPAAIVSSCVLALVLVRKLQKRRHRAKKLLQQSRPSIWSNLSALQTQQQLLAARSRTFSMSLSDADIALLPQINWNRLTLLRFLGSGAFGEVYEGQLQAEDEAQPQRVAIKSLRKGASEFAELLQEAQLMSNFKHENIVCLIGICCDTDSISLIMEHMEAGDLLSYLRAARPSSQEALSKLQLPELLSMCLDVANGCSYMEDMHFVHRDLACRNCLVSDGAAIGGRRIVKIGDFGLARDIYKSDYYRKEGEGLLPVRWMALESLVDGLFSTQSDVWAFGVLCWEIFTLGQQPYAARNNFEVLAHVKEGGRLQQPERCPEKLYALLLQCWRSEPWERPSFKRCLSTLQALSSDLRRTEMLATDETPLVSALCAFKPDAKVRFDDAPQRLTLHLDAKDTVSTTDADTTGSPTTPTAPTTPTTTTSTIAVVSTAPSSENGQLYANEGISGL</sequence>
<accession>P20806</accession>
<dbReference type="EC" id="2.7.10.1"/>
<dbReference type="EMBL" id="M34545">
    <property type="protein sequence ID" value="AAA28883.1"/>
    <property type="molecule type" value="Genomic_DNA"/>
</dbReference>
<dbReference type="EMBL" id="M34544">
    <property type="protein sequence ID" value="AAA28883.1"/>
    <property type="status" value="JOINED"/>
    <property type="molecule type" value="Genomic_DNA"/>
</dbReference>
<dbReference type="EMBL" id="M34543">
    <property type="protein sequence ID" value="AAA28883.1"/>
    <property type="status" value="JOINED"/>
    <property type="molecule type" value="Genomic_DNA"/>
</dbReference>
<dbReference type="PIR" id="A35774">
    <property type="entry name" value="A35774"/>
</dbReference>
<dbReference type="SMR" id="P20806"/>
<dbReference type="GlyCosmos" id="P20806">
    <property type="glycosylation" value="22 sites, No reported glycans"/>
</dbReference>
<dbReference type="eggNOG" id="KOG1095">
    <property type="taxonomic scope" value="Eukaryota"/>
</dbReference>
<dbReference type="OrthoDB" id="65481at2759"/>
<dbReference type="BRENDA" id="2.7.10.1">
    <property type="organism ID" value="2005"/>
</dbReference>
<dbReference type="ChiTaRS" id="sev">
    <property type="organism name" value="fly"/>
</dbReference>
<dbReference type="GO" id="GO:0005886">
    <property type="term" value="C:plasma membrane"/>
    <property type="evidence" value="ECO:0007669"/>
    <property type="project" value="UniProtKB-SubCell"/>
</dbReference>
<dbReference type="GO" id="GO:0043235">
    <property type="term" value="C:receptor complex"/>
    <property type="evidence" value="ECO:0007669"/>
    <property type="project" value="TreeGrafter"/>
</dbReference>
<dbReference type="GO" id="GO:0005524">
    <property type="term" value="F:ATP binding"/>
    <property type="evidence" value="ECO:0007669"/>
    <property type="project" value="UniProtKB-KW"/>
</dbReference>
<dbReference type="GO" id="GO:0004714">
    <property type="term" value="F:transmembrane receptor protein tyrosine kinase activity"/>
    <property type="evidence" value="ECO:0007669"/>
    <property type="project" value="UniProtKB-EC"/>
</dbReference>
<dbReference type="GO" id="GO:0009653">
    <property type="term" value="P:anatomical structure morphogenesis"/>
    <property type="evidence" value="ECO:0007669"/>
    <property type="project" value="UniProtKB-ARBA"/>
</dbReference>
<dbReference type="GO" id="GO:0007169">
    <property type="term" value="P:cell surface receptor protein tyrosine kinase signaling pathway"/>
    <property type="evidence" value="ECO:0007669"/>
    <property type="project" value="InterPro"/>
</dbReference>
<dbReference type="GO" id="GO:0022008">
    <property type="term" value="P:neurogenesis"/>
    <property type="evidence" value="ECO:0007669"/>
    <property type="project" value="UniProtKB-ARBA"/>
</dbReference>
<dbReference type="GO" id="GO:0032006">
    <property type="term" value="P:regulation of TOR signaling"/>
    <property type="evidence" value="ECO:0007669"/>
    <property type="project" value="TreeGrafter"/>
</dbReference>
<dbReference type="GO" id="GO:0007601">
    <property type="term" value="P:visual perception"/>
    <property type="evidence" value="ECO:0007669"/>
    <property type="project" value="UniProtKB-KW"/>
</dbReference>
<dbReference type="CDD" id="cd00063">
    <property type="entry name" value="FN3"/>
    <property type="match status" value="5"/>
</dbReference>
<dbReference type="FunFam" id="2.60.40.10:FF:002939">
    <property type="entry name" value="Protein sevenless"/>
    <property type="match status" value="1"/>
</dbReference>
<dbReference type="FunFam" id="1.10.510.10:FF:000341">
    <property type="entry name" value="Tyrosine-protein kinase receptor"/>
    <property type="match status" value="1"/>
</dbReference>
<dbReference type="Gene3D" id="2.60.40.10">
    <property type="entry name" value="Immunoglobulins"/>
    <property type="match status" value="5"/>
</dbReference>
<dbReference type="Gene3D" id="3.30.200.20">
    <property type="entry name" value="Phosphorylase Kinase, domain 1"/>
    <property type="match status" value="1"/>
</dbReference>
<dbReference type="Gene3D" id="2.120.10.30">
    <property type="entry name" value="TolB, C-terminal domain"/>
    <property type="match status" value="2"/>
</dbReference>
<dbReference type="Gene3D" id="1.10.510.10">
    <property type="entry name" value="Transferase(Phosphotransferase) domain 1"/>
    <property type="match status" value="1"/>
</dbReference>
<dbReference type="InterPro" id="IPR011042">
    <property type="entry name" value="6-blade_b-propeller_TolB-like"/>
</dbReference>
<dbReference type="InterPro" id="IPR003961">
    <property type="entry name" value="FN3_dom"/>
</dbReference>
<dbReference type="InterPro" id="IPR036116">
    <property type="entry name" value="FN3_sf"/>
</dbReference>
<dbReference type="InterPro" id="IPR013783">
    <property type="entry name" value="Ig-like_fold"/>
</dbReference>
<dbReference type="InterPro" id="IPR011009">
    <property type="entry name" value="Kinase-like_dom_sf"/>
</dbReference>
<dbReference type="InterPro" id="IPR000033">
    <property type="entry name" value="LDLR_classB_rpt"/>
</dbReference>
<dbReference type="InterPro" id="IPR000719">
    <property type="entry name" value="Prot_kinase_dom"/>
</dbReference>
<dbReference type="InterPro" id="IPR017441">
    <property type="entry name" value="Protein_kinase_ATP_BS"/>
</dbReference>
<dbReference type="InterPro" id="IPR050122">
    <property type="entry name" value="RTK"/>
</dbReference>
<dbReference type="InterPro" id="IPR001245">
    <property type="entry name" value="Ser-Thr/Tyr_kinase_cat_dom"/>
</dbReference>
<dbReference type="InterPro" id="IPR008266">
    <property type="entry name" value="Tyr_kinase_AS"/>
</dbReference>
<dbReference type="InterPro" id="IPR020635">
    <property type="entry name" value="Tyr_kinase_cat_dom"/>
</dbReference>
<dbReference type="InterPro" id="IPR002011">
    <property type="entry name" value="Tyr_kinase_rcpt_2_CS"/>
</dbReference>
<dbReference type="PANTHER" id="PTHR24416:SF527">
    <property type="entry name" value="PROTO-ONCOGENE TYROSINE-PROTEIN KINASE ROS"/>
    <property type="match status" value="1"/>
</dbReference>
<dbReference type="PANTHER" id="PTHR24416">
    <property type="entry name" value="TYROSINE-PROTEIN KINASE RECEPTOR"/>
    <property type="match status" value="1"/>
</dbReference>
<dbReference type="Pfam" id="PF00041">
    <property type="entry name" value="fn3"/>
    <property type="match status" value="2"/>
</dbReference>
<dbReference type="Pfam" id="PF07714">
    <property type="entry name" value="PK_Tyr_Ser-Thr"/>
    <property type="match status" value="1"/>
</dbReference>
<dbReference type="PRINTS" id="PR00109">
    <property type="entry name" value="TYRKINASE"/>
</dbReference>
<dbReference type="SMART" id="SM00060">
    <property type="entry name" value="FN3"/>
    <property type="match status" value="7"/>
</dbReference>
<dbReference type="SMART" id="SM00135">
    <property type="entry name" value="LY"/>
    <property type="match status" value="3"/>
</dbReference>
<dbReference type="SMART" id="SM00219">
    <property type="entry name" value="TyrKc"/>
    <property type="match status" value="1"/>
</dbReference>
<dbReference type="SUPFAM" id="SSF49265">
    <property type="entry name" value="Fibronectin type III"/>
    <property type="match status" value="4"/>
</dbReference>
<dbReference type="SUPFAM" id="SSF56112">
    <property type="entry name" value="Protein kinase-like (PK-like)"/>
    <property type="match status" value="1"/>
</dbReference>
<dbReference type="SUPFAM" id="SSF63825">
    <property type="entry name" value="YWTD domain"/>
    <property type="match status" value="3"/>
</dbReference>
<dbReference type="PROSITE" id="PS50853">
    <property type="entry name" value="FN3"/>
    <property type="match status" value="8"/>
</dbReference>
<dbReference type="PROSITE" id="PS00107">
    <property type="entry name" value="PROTEIN_KINASE_ATP"/>
    <property type="match status" value="1"/>
</dbReference>
<dbReference type="PROSITE" id="PS50011">
    <property type="entry name" value="PROTEIN_KINASE_DOM"/>
    <property type="match status" value="1"/>
</dbReference>
<dbReference type="PROSITE" id="PS00109">
    <property type="entry name" value="PROTEIN_KINASE_TYR"/>
    <property type="match status" value="1"/>
</dbReference>
<dbReference type="PROSITE" id="PS00239">
    <property type="entry name" value="RECEPTOR_TYR_KIN_II"/>
    <property type="match status" value="1"/>
</dbReference>
<evidence type="ECO:0000250" key="1"/>
<evidence type="ECO:0000255" key="2"/>
<evidence type="ECO:0000255" key="3">
    <source>
        <dbReference type="PROSITE-ProRule" id="PRU00159"/>
    </source>
</evidence>
<evidence type="ECO:0000255" key="4">
    <source>
        <dbReference type="PROSITE-ProRule" id="PRU00316"/>
    </source>
</evidence>
<evidence type="ECO:0000255" key="5">
    <source>
        <dbReference type="PROSITE-ProRule" id="PRU10028"/>
    </source>
</evidence>
<evidence type="ECO:0000256" key="6">
    <source>
        <dbReference type="SAM" id="MobiDB-lite"/>
    </source>
</evidence>
<evidence type="ECO:0000305" key="7"/>
<protein>
    <recommendedName>
        <fullName>Protein sevenless</fullName>
        <ecNumber>2.7.10.1</ecNumber>
    </recommendedName>
</protein>
<keyword id="KW-0067">ATP-binding</keyword>
<keyword id="KW-1003">Cell membrane</keyword>
<keyword id="KW-0325">Glycoprotein</keyword>
<keyword id="KW-0418">Kinase</keyword>
<keyword id="KW-0472">Membrane</keyword>
<keyword id="KW-0547">Nucleotide-binding</keyword>
<keyword id="KW-0597">Phosphoprotein</keyword>
<keyword id="KW-0675">Receptor</keyword>
<keyword id="KW-0677">Repeat</keyword>
<keyword id="KW-0716">Sensory transduction</keyword>
<keyword id="KW-0808">Transferase</keyword>
<keyword id="KW-0812">Transmembrane</keyword>
<keyword id="KW-1133">Transmembrane helix</keyword>
<keyword id="KW-0829">Tyrosine-protein kinase</keyword>
<keyword id="KW-0844">Vision</keyword>
<reference key="1">
    <citation type="journal article" date="1990" name="Proc. Natl. Acad. Sci. U.S.A.">
        <title>Comparison of the sevenless genes of Drosophila virilis and Drosophila melanogaster.</title>
        <authorList>
            <person name="Michael W.M."/>
            <person name="Bowtell D.D.L."/>
            <person name="Rubin G.M."/>
        </authorList>
    </citation>
    <scope>NUCLEOTIDE SEQUENCE [GENOMIC DNA]</scope>
</reference>
<feature type="chain" id="PRO_0000058929" description="Protein sevenless">
    <location>
        <begin position="1"/>
        <end position="2594"/>
    </location>
</feature>
<feature type="topological domain" description="Extracellular" evidence="2">
    <location>
        <begin position="1"/>
        <end position="2141"/>
    </location>
</feature>
<feature type="transmembrane region" description="Helical" evidence="2">
    <location>
        <begin position="2142"/>
        <end position="2162"/>
    </location>
</feature>
<feature type="topological domain" description="Cytoplasmic" evidence="2">
    <location>
        <begin position="2163"/>
        <end position="2594"/>
    </location>
</feature>
<feature type="domain" description="Fibronectin type-III 1" evidence="4">
    <location>
        <begin position="358"/>
        <end position="462"/>
    </location>
</feature>
<feature type="domain" description="Fibronectin type-III 2" evidence="4">
    <location>
        <begin position="468"/>
        <end position="560"/>
    </location>
</feature>
<feature type="domain" description="Fibronectin type-III 3" evidence="4">
    <location>
        <begin position="838"/>
        <end position="938"/>
    </location>
</feature>
<feature type="repeat" description="LDL-receptor class B">
    <location>
        <begin position="1024"/>
        <end position="1066"/>
    </location>
</feature>
<feature type="domain" description="Fibronectin type-III 4" evidence="4">
    <location>
        <begin position="1227"/>
        <end position="1317"/>
    </location>
</feature>
<feature type="domain" description="Fibronectin type-III 5" evidence="4">
    <location>
        <begin position="1324"/>
        <end position="1430"/>
    </location>
</feature>
<feature type="domain" description="Fibronectin type-III 6" evidence="4">
    <location>
        <begin position="1711"/>
        <end position="1814"/>
    </location>
</feature>
<feature type="domain" description="Fibronectin type-III 7" evidence="4">
    <location>
        <begin position="1821"/>
        <end position="1920"/>
    </location>
</feature>
<feature type="domain" description="Fibronectin type-III 8" evidence="4">
    <location>
        <begin position="1922"/>
        <end position="2010"/>
    </location>
</feature>
<feature type="domain" description="Fibronectin type-III 9" evidence="4">
    <location>
        <begin position="2014"/>
        <end position="2132"/>
    </location>
</feature>
<feature type="domain" description="Protein kinase" evidence="3">
    <location>
        <begin position="2224"/>
        <end position="2495"/>
    </location>
</feature>
<feature type="region of interest" description="Disordered" evidence="6">
    <location>
        <begin position="1"/>
        <end position="34"/>
    </location>
</feature>
<feature type="region of interest" description="Disordered" evidence="6">
    <location>
        <begin position="49"/>
        <end position="92"/>
    </location>
</feature>
<feature type="region of interest" description="Disordered" evidence="6">
    <location>
        <begin position="2543"/>
        <end position="2568"/>
    </location>
</feature>
<feature type="compositionally biased region" description="Low complexity" evidence="6">
    <location>
        <begin position="9"/>
        <end position="26"/>
    </location>
</feature>
<feature type="compositionally biased region" description="Low complexity" evidence="6">
    <location>
        <begin position="2545"/>
        <end position="2568"/>
    </location>
</feature>
<feature type="active site" description="Proton acceptor" evidence="3 5">
    <location>
        <position position="2355"/>
    </location>
</feature>
<feature type="binding site" evidence="3">
    <location>
        <begin position="2230"/>
        <end position="2238"/>
    </location>
    <ligand>
        <name>ATP</name>
        <dbReference type="ChEBI" id="CHEBI:30616"/>
    </ligand>
</feature>
<feature type="binding site" evidence="3">
    <location>
        <position position="2257"/>
    </location>
    <ligand>
        <name>ATP</name>
        <dbReference type="ChEBI" id="CHEBI:30616"/>
    </ligand>
</feature>
<feature type="modified residue" description="Phosphotyrosine; by autocatalysis" evidence="1">
    <location>
        <position position="2391"/>
    </location>
</feature>
<feature type="glycosylation site" description="N-linked (GlcNAc...) asparagine" evidence="2">
    <location>
        <position position="77"/>
    </location>
</feature>
<feature type="glycosylation site" description="N-linked (GlcNAc...) asparagine" evidence="2">
    <location>
        <position position="401"/>
    </location>
</feature>
<feature type="glycosylation site" description="N-linked (GlcNAc...) asparagine" evidence="2">
    <location>
        <position position="508"/>
    </location>
</feature>
<feature type="glycosylation site" description="N-linked (GlcNAc...) asparagine" evidence="2">
    <location>
        <position position="532"/>
    </location>
</feature>
<feature type="glycosylation site" description="N-linked (GlcNAc...) asparagine" evidence="2">
    <location>
        <position position="641"/>
    </location>
</feature>
<feature type="glycosylation site" description="N-linked (GlcNAc...) asparagine" evidence="2">
    <location>
        <position position="667"/>
    </location>
</feature>
<feature type="glycosylation site" description="N-linked (GlcNAc...) asparagine" evidence="2">
    <location>
        <position position="778"/>
    </location>
</feature>
<feature type="glycosylation site" description="N-linked (GlcNAc...) asparagine" evidence="2">
    <location>
        <position position="797"/>
    </location>
</feature>
<feature type="glycosylation site" description="N-linked (GlcNAc...) asparagine" evidence="2">
    <location>
        <position position="874"/>
    </location>
</feature>
<feature type="glycosylation site" description="N-linked (GlcNAc...) asparagine" evidence="2">
    <location>
        <position position="980"/>
    </location>
</feature>
<feature type="glycosylation site" description="N-linked (GlcNAc...) asparagine" evidence="2">
    <location>
        <position position="1257"/>
    </location>
</feature>
<feature type="glycosylation site" description="N-linked (GlcNAc...) asparagine" evidence="2">
    <location>
        <position position="1344"/>
    </location>
</feature>
<feature type="glycosylation site" description="N-linked (GlcNAc...) asparagine" evidence="2">
    <location>
        <position position="1382"/>
    </location>
</feature>
<feature type="glycosylation site" description="N-linked (GlcNAc...) asparagine" evidence="2">
    <location>
        <position position="1577"/>
    </location>
</feature>
<feature type="glycosylation site" description="N-linked (GlcNAc...) asparagine" evidence="2">
    <location>
        <position position="1587"/>
    </location>
</feature>
<feature type="glycosylation site" description="N-linked (GlcNAc...) asparagine" evidence="2">
    <location>
        <position position="1665"/>
    </location>
</feature>
<feature type="glycosylation site" description="N-linked (GlcNAc...) asparagine" evidence="2">
    <location>
        <position position="1752"/>
    </location>
</feature>
<feature type="glycosylation site" description="N-linked (GlcNAc...) asparagine" evidence="2">
    <location>
        <position position="1776"/>
    </location>
</feature>
<feature type="glycosylation site" description="N-linked (GlcNAc...) asparagine" evidence="2">
    <location>
        <position position="1824"/>
    </location>
</feature>
<feature type="glycosylation site" description="N-linked (GlcNAc...) asparagine" evidence="2">
    <location>
        <position position="1908"/>
    </location>
</feature>
<feature type="glycosylation site" description="N-linked (GlcNAc...) asparagine" evidence="2">
    <location>
        <position position="1966"/>
    </location>
</feature>
<feature type="glycosylation site" description="N-linked (GlcNAc...) asparagine" evidence="2">
    <location>
        <position position="2088"/>
    </location>
</feature>
<organism>
    <name type="scientific">Drosophila virilis</name>
    <name type="common">Fruit fly</name>
    <dbReference type="NCBI Taxonomy" id="7244"/>
    <lineage>
        <taxon>Eukaryota</taxon>
        <taxon>Metazoa</taxon>
        <taxon>Ecdysozoa</taxon>
        <taxon>Arthropoda</taxon>
        <taxon>Hexapoda</taxon>
        <taxon>Insecta</taxon>
        <taxon>Pterygota</taxon>
        <taxon>Neoptera</taxon>
        <taxon>Endopterygota</taxon>
        <taxon>Diptera</taxon>
        <taxon>Brachycera</taxon>
        <taxon>Muscomorpha</taxon>
        <taxon>Ephydroidea</taxon>
        <taxon>Drosophilidae</taxon>
        <taxon>Drosophila</taxon>
    </lineage>
</organism>